<proteinExistence type="evidence at transcript level"/>
<dbReference type="EMBL" id="Y14078">
    <property type="protein sequence ID" value="CAA74421.1"/>
    <property type="molecule type" value="Genomic_DNA"/>
</dbReference>
<dbReference type="EMBL" id="AL009126">
    <property type="protein sequence ID" value="CAB12832.1"/>
    <property type="molecule type" value="Genomic_DNA"/>
</dbReference>
<dbReference type="PIR" id="H69818">
    <property type="entry name" value="H69818"/>
</dbReference>
<dbReference type="SMR" id="O08455"/>
<dbReference type="FunCoup" id="O08455">
    <property type="interactions" value="13"/>
</dbReference>
<dbReference type="IntAct" id="O08455">
    <property type="interactions" value="13"/>
</dbReference>
<dbReference type="STRING" id="224308.BSU09920"/>
<dbReference type="PaxDb" id="224308-BSU09920"/>
<dbReference type="EnsemblBacteria" id="CAB12832">
    <property type="protein sequence ID" value="CAB12832"/>
    <property type="gene ID" value="BSU_09920"/>
</dbReference>
<dbReference type="GeneID" id="936294"/>
<dbReference type="KEGG" id="bsu:BSU09920"/>
<dbReference type="PATRIC" id="fig|224308.43.peg.1034"/>
<dbReference type="eggNOG" id="COG4717">
    <property type="taxonomic scope" value="Bacteria"/>
</dbReference>
<dbReference type="InParanoid" id="O08455"/>
<dbReference type="OrthoDB" id="9764467at2"/>
<dbReference type="PhylomeDB" id="O08455"/>
<dbReference type="BioCyc" id="BSUB:BSU09920-MONOMER"/>
<dbReference type="Proteomes" id="UP000001570">
    <property type="component" value="Chromosome"/>
</dbReference>
<dbReference type="GO" id="GO:0005886">
    <property type="term" value="C:plasma membrane"/>
    <property type="evidence" value="ECO:0007669"/>
    <property type="project" value="UniProtKB-SubCell"/>
</dbReference>
<dbReference type="Gene3D" id="3.40.50.300">
    <property type="entry name" value="P-loop containing nucleotide triphosphate hydrolases"/>
    <property type="match status" value="2"/>
</dbReference>
<dbReference type="InterPro" id="IPR027417">
    <property type="entry name" value="P-loop_NTPase"/>
</dbReference>
<dbReference type="InterPro" id="IPR038734">
    <property type="entry name" value="YhaN_AAA"/>
</dbReference>
<dbReference type="PANTHER" id="PTHR41259">
    <property type="entry name" value="DOUBLE-STRAND BREAK REPAIR RAD50 ATPASE, PUTATIVE-RELATED"/>
    <property type="match status" value="1"/>
</dbReference>
<dbReference type="PANTHER" id="PTHR41259:SF1">
    <property type="entry name" value="DOUBLE-STRAND BREAK REPAIR RAD50 ATPASE, PUTATIVE-RELATED"/>
    <property type="match status" value="1"/>
</dbReference>
<dbReference type="Pfam" id="PF13514">
    <property type="entry name" value="AAA_27"/>
    <property type="match status" value="1"/>
</dbReference>
<dbReference type="SUPFAM" id="SSF52540">
    <property type="entry name" value="P-loop containing nucleoside triphosphate hydrolases"/>
    <property type="match status" value="1"/>
</dbReference>
<reference key="1">
    <citation type="journal article" date="1998" name="Microbiology">
        <title>The 172 kb prkA-addAB region from 83 degrees to 97 degrees of the Bacillus subtilis chromosome contains several dysfunctional genes, the glyB marker, many genes encoding transporter proteins, and the ubiquitous hit gene.</title>
        <authorList>
            <person name="Noback M.A."/>
            <person name="Holsappel S."/>
            <person name="Kiewiet R."/>
            <person name="Terpstra P."/>
            <person name="Wambutt R."/>
            <person name="Wedler H."/>
            <person name="Venema G."/>
            <person name="Bron S."/>
        </authorList>
    </citation>
    <scope>NUCLEOTIDE SEQUENCE [GENOMIC DNA]</scope>
    <source>
        <strain>168</strain>
    </source>
</reference>
<reference key="2">
    <citation type="journal article" date="1997" name="Nature">
        <title>The complete genome sequence of the Gram-positive bacterium Bacillus subtilis.</title>
        <authorList>
            <person name="Kunst F."/>
            <person name="Ogasawara N."/>
            <person name="Moszer I."/>
            <person name="Albertini A.M."/>
            <person name="Alloni G."/>
            <person name="Azevedo V."/>
            <person name="Bertero M.G."/>
            <person name="Bessieres P."/>
            <person name="Bolotin A."/>
            <person name="Borchert S."/>
            <person name="Borriss R."/>
            <person name="Boursier L."/>
            <person name="Brans A."/>
            <person name="Braun M."/>
            <person name="Brignell S.C."/>
            <person name="Bron S."/>
            <person name="Brouillet S."/>
            <person name="Bruschi C.V."/>
            <person name="Caldwell B."/>
            <person name="Capuano V."/>
            <person name="Carter N.M."/>
            <person name="Choi S.-K."/>
            <person name="Codani J.-J."/>
            <person name="Connerton I.F."/>
            <person name="Cummings N.J."/>
            <person name="Daniel R.A."/>
            <person name="Denizot F."/>
            <person name="Devine K.M."/>
            <person name="Duesterhoeft A."/>
            <person name="Ehrlich S.D."/>
            <person name="Emmerson P.T."/>
            <person name="Entian K.-D."/>
            <person name="Errington J."/>
            <person name="Fabret C."/>
            <person name="Ferrari E."/>
            <person name="Foulger D."/>
            <person name="Fritz C."/>
            <person name="Fujita M."/>
            <person name="Fujita Y."/>
            <person name="Fuma S."/>
            <person name="Galizzi A."/>
            <person name="Galleron N."/>
            <person name="Ghim S.-Y."/>
            <person name="Glaser P."/>
            <person name="Goffeau A."/>
            <person name="Golightly E.J."/>
            <person name="Grandi G."/>
            <person name="Guiseppi G."/>
            <person name="Guy B.J."/>
            <person name="Haga K."/>
            <person name="Haiech J."/>
            <person name="Harwood C.R."/>
            <person name="Henaut A."/>
            <person name="Hilbert H."/>
            <person name="Holsappel S."/>
            <person name="Hosono S."/>
            <person name="Hullo M.-F."/>
            <person name="Itaya M."/>
            <person name="Jones L.-M."/>
            <person name="Joris B."/>
            <person name="Karamata D."/>
            <person name="Kasahara Y."/>
            <person name="Klaerr-Blanchard M."/>
            <person name="Klein C."/>
            <person name="Kobayashi Y."/>
            <person name="Koetter P."/>
            <person name="Koningstein G."/>
            <person name="Krogh S."/>
            <person name="Kumano M."/>
            <person name="Kurita K."/>
            <person name="Lapidus A."/>
            <person name="Lardinois S."/>
            <person name="Lauber J."/>
            <person name="Lazarevic V."/>
            <person name="Lee S.-M."/>
            <person name="Levine A."/>
            <person name="Liu H."/>
            <person name="Masuda S."/>
            <person name="Mauel C."/>
            <person name="Medigue C."/>
            <person name="Medina N."/>
            <person name="Mellado R.P."/>
            <person name="Mizuno M."/>
            <person name="Moestl D."/>
            <person name="Nakai S."/>
            <person name="Noback M."/>
            <person name="Noone D."/>
            <person name="O'Reilly M."/>
            <person name="Ogawa K."/>
            <person name="Ogiwara A."/>
            <person name="Oudega B."/>
            <person name="Park S.-H."/>
            <person name="Parro V."/>
            <person name="Pohl T.M."/>
            <person name="Portetelle D."/>
            <person name="Porwollik S."/>
            <person name="Prescott A.M."/>
            <person name="Presecan E."/>
            <person name="Pujic P."/>
            <person name="Purnelle B."/>
            <person name="Rapoport G."/>
            <person name="Rey M."/>
            <person name="Reynolds S."/>
            <person name="Rieger M."/>
            <person name="Rivolta C."/>
            <person name="Rocha E."/>
            <person name="Roche B."/>
            <person name="Rose M."/>
            <person name="Sadaie Y."/>
            <person name="Sato T."/>
            <person name="Scanlan E."/>
            <person name="Schleich S."/>
            <person name="Schroeter R."/>
            <person name="Scoffone F."/>
            <person name="Sekiguchi J."/>
            <person name="Sekowska A."/>
            <person name="Seror S.J."/>
            <person name="Serror P."/>
            <person name="Shin B.-S."/>
            <person name="Soldo B."/>
            <person name="Sorokin A."/>
            <person name="Tacconi E."/>
            <person name="Takagi T."/>
            <person name="Takahashi H."/>
            <person name="Takemaru K."/>
            <person name="Takeuchi M."/>
            <person name="Tamakoshi A."/>
            <person name="Tanaka T."/>
            <person name="Terpstra P."/>
            <person name="Tognoni A."/>
            <person name="Tosato V."/>
            <person name="Uchiyama S."/>
            <person name="Vandenbol M."/>
            <person name="Vannier F."/>
            <person name="Vassarotti A."/>
            <person name="Viari A."/>
            <person name="Wambutt R."/>
            <person name="Wedler E."/>
            <person name="Wedler H."/>
            <person name="Weitzenegger T."/>
            <person name="Winters P."/>
            <person name="Wipat A."/>
            <person name="Yamamoto H."/>
            <person name="Yamane K."/>
            <person name="Yasumoto K."/>
            <person name="Yata K."/>
            <person name="Yoshida K."/>
            <person name="Yoshikawa H.-F."/>
            <person name="Zumstein E."/>
            <person name="Yoshikawa H."/>
            <person name="Danchin A."/>
        </authorList>
    </citation>
    <scope>NUCLEOTIDE SEQUENCE [LARGE SCALE GENOMIC DNA]</scope>
    <source>
        <strain>168</strain>
    </source>
</reference>
<reference key="3">
    <citation type="journal article" date="2005" name="J. Bacteriol.">
        <title>Genetic composition of the Bacillus subtilis SOS system.</title>
        <authorList>
            <person name="Au N."/>
            <person name="Kuester-Schoeck E."/>
            <person name="Mandava V."/>
            <person name="Bothwell L.E."/>
            <person name="Canny S.P."/>
            <person name="Chachu K."/>
            <person name="Colavito S.A."/>
            <person name="Fuller S.N."/>
            <person name="Groban E.S."/>
            <person name="Hensley L.A."/>
            <person name="O'Brien T.C."/>
            <person name="Shah A."/>
            <person name="Tierney J.T."/>
            <person name="Tomm L.L."/>
            <person name="O'Gara T.M."/>
            <person name="Goranov A.I."/>
            <person name="Grossman A.D."/>
            <person name="Lovett C.M."/>
        </authorList>
    </citation>
    <scope>INDUCTION BY MITOMYCIN C AND UV</scope>
    <scope>PROBABLE OPERON STRUCTURE</scope>
    <source>
        <strain>168 / YB886 / BG214</strain>
    </source>
</reference>
<organism>
    <name type="scientific">Bacillus subtilis (strain 168)</name>
    <dbReference type="NCBI Taxonomy" id="224308"/>
    <lineage>
        <taxon>Bacteria</taxon>
        <taxon>Bacillati</taxon>
        <taxon>Bacillota</taxon>
        <taxon>Bacilli</taxon>
        <taxon>Bacillales</taxon>
        <taxon>Bacillaceae</taxon>
        <taxon>Bacillus</taxon>
    </lineage>
</organism>
<feature type="chain" id="PRO_0000388333" description="Uncharacterized protein YhaN">
    <location>
        <begin position="1"/>
        <end position="963"/>
    </location>
</feature>
<feature type="transmembrane region" description="Helical" evidence="1">
    <location>
        <begin position="468"/>
        <end position="488"/>
    </location>
</feature>
<feature type="coiled-coil region" evidence="1">
    <location>
        <begin position="176"/>
        <end position="236"/>
    </location>
</feature>
<feature type="coiled-coil region" evidence="1">
    <location>
        <begin position="373"/>
        <end position="467"/>
    </location>
</feature>
<feature type="coiled-coil region" evidence="1">
    <location>
        <begin position="536"/>
        <end position="570"/>
    </location>
</feature>
<feature type="coiled-coil region" evidence="1">
    <location>
        <begin position="647"/>
        <end position="789"/>
    </location>
</feature>
<comment type="subcellular location">
    <subcellularLocation>
        <location evidence="3">Cell membrane</location>
        <topology evidence="3">Single-pass membrane protein</topology>
    </subcellularLocation>
</comment>
<comment type="induction">
    <text evidence="2">Very low induction by mitomycin C and UV irradiation; probably a member of the yhaONM operon.</text>
</comment>
<evidence type="ECO:0000255" key="1"/>
<evidence type="ECO:0000269" key="2">
    <source>
    </source>
</evidence>
<evidence type="ECO:0000305" key="3"/>
<accession>O08455</accession>
<accession>Q796V3</accession>
<keyword id="KW-1003">Cell membrane</keyword>
<keyword id="KW-0175">Coiled coil</keyword>
<keyword id="KW-0472">Membrane</keyword>
<keyword id="KW-1185">Reference proteome</keyword>
<keyword id="KW-0812">Transmembrane</keyword>
<keyword id="KW-1133">Transmembrane helix</keyword>
<sequence length="963" mass="111159">MTALRIISLHIYQYGKFSNRTFDFSASPVQVIYGLNEAGKTTMMSFIESMLFGFPKTKKYEPKTGGVYGGVLEAEHPEYGVLKIERTKGTAEKLSVYTEKGEVKQGDVLKQLFQGTDRSLYKAIYSFDVFGLQEIHAFNRDKIGEFLLFSSLFGAEAVSKLDSRLTKESERLYKPNGRNPQLNQELETLKQLAVKLKQAEAEEAGYHQLLEEKRTLEARLAAAETELKETAGHIRMIEGAIERKPLLNEKATLEQVIAEFPEHAGQFPADGLHQLEKYESHLHPKSAQLEALRVKMAELDKQRQKLIPDKELLAKETLIQELSAAFHMYQSWGEQLAAIQAQLRQTSAQTAAGLEQLNKTDENELLNMNTSYDYEWQLQQAVQQYVQARDRKRQLDETFELARQELEDAEKAVRAASSAILENSQRKDKEAALRAYDETQGQHQEQAKLREQLTFFERQQAKQKKTVIAAGMLFIVLFSLLQQWIPAISFGAALIVYWLVSGKSSSRNSRETRQPMTDISPAEAEMLREALWEDDRNKQHLLTQRAALQQKEAAYERVIQQFEQWEAEMAPSFTQVERFMNELGFKEDPSFLLDAYSLMKDVKKEVKKKHELTIEAGRLKKHRRTFEERVSMLLPVNQSQDISISDALHTLRKNIEREKEIEKQKKEIETDIHYTKEQMLELEQEIQYFHAQIEQLFAAAAAKDRDAFFAIAAISRQLKDTENKLHHVNAQLQGGYPEELELADSNTLSELKDKQFVENERKERLTEEIEQLRSQIALLSVKQEQLEASGMVSDLKLQTEMQKERVKETAKKWASIQMVKQVIRNKLERHKKIELPRLLETAGEFFRPLTDGNYQTIYFSETDDSIMVMHRDGTVYHAEELSQGTCEQLYTAIRFALAVTRQGESKLPFQLDDSFVHFDQERLKRVLHVLYDLSEGGRQILYFTCHEHVKDAFHSSQIIHLVS</sequence>
<protein>
    <recommendedName>
        <fullName>Uncharacterized protein YhaN</fullName>
    </recommendedName>
</protein>
<gene>
    <name type="primary">yhaN</name>
    <name type="ordered locus">BSU09920</name>
</gene>
<name>YHAN_BACSU</name>